<gene>
    <name type="ordered locus">BMA10229_A0389</name>
</gene>
<accession>A2S370</accession>
<name>Y2689_BURM9</name>
<dbReference type="EMBL" id="CP000546">
    <property type="protein sequence ID" value="ABN02468.2"/>
    <property type="status" value="ALT_INIT"/>
    <property type="molecule type" value="Genomic_DNA"/>
</dbReference>
<dbReference type="RefSeq" id="WP_004199466.1">
    <property type="nucleotide sequence ID" value="NC_008836.1"/>
</dbReference>
<dbReference type="SMR" id="A2S370"/>
<dbReference type="KEGG" id="bml:BMA10229_A0389"/>
<dbReference type="HOGENOM" id="CLU_101036_2_2_4"/>
<dbReference type="Proteomes" id="UP000002283">
    <property type="component" value="Chromosome I"/>
</dbReference>
<dbReference type="Gene3D" id="3.30.450.150">
    <property type="entry name" value="Haem-degrading domain"/>
    <property type="match status" value="1"/>
</dbReference>
<dbReference type="HAMAP" id="MF_00761">
    <property type="entry name" value="UPF0303"/>
    <property type="match status" value="1"/>
</dbReference>
<dbReference type="InterPro" id="IPR005624">
    <property type="entry name" value="PduO/GlcC-like"/>
</dbReference>
<dbReference type="InterPro" id="IPR038084">
    <property type="entry name" value="PduO/GlcC-like_sf"/>
</dbReference>
<dbReference type="InterPro" id="IPR010371">
    <property type="entry name" value="YBR137W-like"/>
</dbReference>
<dbReference type="NCBIfam" id="NF002695">
    <property type="entry name" value="PRK02487.1-4"/>
    <property type="match status" value="1"/>
</dbReference>
<dbReference type="NCBIfam" id="NF002696">
    <property type="entry name" value="PRK02487.1-5"/>
    <property type="match status" value="1"/>
</dbReference>
<dbReference type="PANTHER" id="PTHR28255">
    <property type="match status" value="1"/>
</dbReference>
<dbReference type="PANTHER" id="PTHR28255:SF1">
    <property type="entry name" value="UPF0303 PROTEIN YBR137W"/>
    <property type="match status" value="1"/>
</dbReference>
<dbReference type="Pfam" id="PF03928">
    <property type="entry name" value="HbpS-like"/>
    <property type="match status" value="1"/>
</dbReference>
<dbReference type="PIRSF" id="PIRSF008757">
    <property type="entry name" value="UCP008757"/>
    <property type="match status" value="1"/>
</dbReference>
<dbReference type="SUPFAM" id="SSF143744">
    <property type="entry name" value="GlcG-like"/>
    <property type="match status" value="1"/>
</dbReference>
<organism>
    <name type="scientific">Burkholderia mallei (strain NCTC 10229)</name>
    <dbReference type="NCBI Taxonomy" id="412022"/>
    <lineage>
        <taxon>Bacteria</taxon>
        <taxon>Pseudomonadati</taxon>
        <taxon>Pseudomonadota</taxon>
        <taxon>Betaproteobacteria</taxon>
        <taxon>Burkholderiales</taxon>
        <taxon>Burkholderiaceae</taxon>
        <taxon>Burkholderia</taxon>
        <taxon>pseudomallei group</taxon>
    </lineage>
</organism>
<reference key="1">
    <citation type="journal article" date="2010" name="Genome Biol. Evol.">
        <title>Continuing evolution of Burkholderia mallei through genome reduction and large-scale rearrangements.</title>
        <authorList>
            <person name="Losada L."/>
            <person name="Ronning C.M."/>
            <person name="DeShazer D."/>
            <person name="Woods D."/>
            <person name="Fedorova N."/>
            <person name="Kim H.S."/>
            <person name="Shabalina S.A."/>
            <person name="Pearson T.R."/>
            <person name="Brinkac L."/>
            <person name="Tan P."/>
            <person name="Nandi T."/>
            <person name="Crabtree J."/>
            <person name="Badger J."/>
            <person name="Beckstrom-Sternberg S."/>
            <person name="Saqib M."/>
            <person name="Schutzer S.E."/>
            <person name="Keim P."/>
            <person name="Nierman W.C."/>
        </authorList>
    </citation>
    <scope>NUCLEOTIDE SEQUENCE [LARGE SCALE GENOMIC DNA]</scope>
    <source>
        <strain>NCTC 10229</strain>
    </source>
</reference>
<evidence type="ECO:0000255" key="1">
    <source>
        <dbReference type="HAMAP-Rule" id="MF_00761"/>
    </source>
</evidence>
<evidence type="ECO:0000305" key="2"/>
<feature type="chain" id="PRO_1000046741" description="UPF0303 protein BMA10229_A0389">
    <location>
        <begin position="1"/>
        <end position="165"/>
    </location>
</feature>
<proteinExistence type="inferred from homology"/>
<sequence>MDIALDLQSIAVQEKTLVFPQFDAARAWALGSQLREFALARGHAVAIDVRTFGQPLFFALVDGATPDNVDWARRKGNVVAHFRRSSYAIGLRLQQAGATLADKHGLPAAEYASHGGAFPIAVAGAGVIGSVTVSGLPQRGDHELVVEALCAQLGHAYATLALTGN</sequence>
<protein>
    <recommendedName>
        <fullName evidence="1">UPF0303 protein BMA10229_A0389</fullName>
    </recommendedName>
</protein>
<comment type="similarity">
    <text evidence="1">Belongs to the UPF0303 family.</text>
</comment>
<comment type="sequence caution" evidence="2">
    <conflict type="erroneous initiation">
        <sequence resource="EMBL-CDS" id="ABN02468"/>
    </conflict>
    <text>Extended N-terminus.</text>
</comment>